<keyword id="KW-1003">Cell membrane</keyword>
<keyword id="KW-0966">Cell projection</keyword>
<keyword id="KW-1015">Disulfide bond</keyword>
<keyword id="KW-0325">Glycoprotein</keyword>
<keyword id="KW-0407">Ion channel</keyword>
<keyword id="KW-0406">Ion transport</keyword>
<keyword id="KW-0472">Membrane</keyword>
<keyword id="KW-0479">Metal-binding</keyword>
<keyword id="KW-0630">Potassium</keyword>
<keyword id="KW-0631">Potassium channel</keyword>
<keyword id="KW-0633">Potassium transport</keyword>
<keyword id="KW-1185">Reference proteome</keyword>
<keyword id="KW-0812">Transmembrane</keyword>
<keyword id="KW-1133">Transmembrane helix</keyword>
<keyword id="KW-0813">Transport</keyword>
<organism evidence="12">
    <name type="scientific">Rattus norvegicus</name>
    <name type="common">Rat</name>
    <dbReference type="NCBI Taxonomy" id="10116"/>
    <lineage>
        <taxon>Eukaryota</taxon>
        <taxon>Metazoa</taxon>
        <taxon>Chordata</taxon>
        <taxon>Craniata</taxon>
        <taxon>Vertebrata</taxon>
        <taxon>Euteleostomi</taxon>
        <taxon>Mammalia</taxon>
        <taxon>Eutheria</taxon>
        <taxon>Euarchontoglires</taxon>
        <taxon>Glires</taxon>
        <taxon>Rodentia</taxon>
        <taxon>Myomorpha</taxon>
        <taxon>Muroidea</taxon>
        <taxon>Muridae</taxon>
        <taxon>Murinae</taxon>
        <taxon>Rattus</taxon>
    </lineage>
</organism>
<reference evidence="11" key="1">
    <citation type="journal article" date="2001" name="Pflugers Arch.">
        <title>Synergistic interaction and the role of C-terminus in the activation of TRAAK K+ channels by pressure, free fatty acids and alkali.</title>
        <authorList>
            <person name="Kim Y."/>
            <person name="Bang H."/>
            <person name="Gnatenco C."/>
            <person name="Kim D."/>
        </authorList>
    </citation>
    <scope>NUCLEOTIDE SEQUENCE [MRNA]</scope>
    <scope>FUNCTION</scope>
    <scope>TRANSPORTER ACTIVITY</scope>
    <scope>ACTIVITY REGULATION</scope>
    <scope>SUBCELLULAR LOCATION</scope>
    <scope>TISSUE SPECIFICITY</scope>
    <source>
        <strain evidence="11">Sprague-Dawley</strain>
    </source>
</reference>
<reference key="2">
    <citation type="journal article" date="2004" name="Nature">
        <title>Genome sequence of the Brown Norway rat yields insights into mammalian evolution.</title>
        <authorList>
            <person name="Gibbs R.A."/>
            <person name="Weinstock G.M."/>
            <person name="Metzker M.L."/>
            <person name="Muzny D.M."/>
            <person name="Sodergren E.J."/>
            <person name="Scherer S."/>
            <person name="Scott G."/>
            <person name="Steffen D."/>
            <person name="Worley K.C."/>
            <person name="Burch P.E."/>
            <person name="Okwuonu G."/>
            <person name="Hines S."/>
            <person name="Lewis L."/>
            <person name="Deramo C."/>
            <person name="Delgado O."/>
            <person name="Dugan-Rocha S."/>
            <person name="Miner G."/>
            <person name="Morgan M."/>
            <person name="Hawes A."/>
            <person name="Gill R."/>
            <person name="Holt R.A."/>
            <person name="Adams M.D."/>
            <person name="Amanatides P.G."/>
            <person name="Baden-Tillson H."/>
            <person name="Barnstead M."/>
            <person name="Chin S."/>
            <person name="Evans C.A."/>
            <person name="Ferriera S."/>
            <person name="Fosler C."/>
            <person name="Glodek A."/>
            <person name="Gu Z."/>
            <person name="Jennings D."/>
            <person name="Kraft C.L."/>
            <person name="Nguyen T."/>
            <person name="Pfannkoch C.M."/>
            <person name="Sitter C."/>
            <person name="Sutton G.G."/>
            <person name="Venter J.C."/>
            <person name="Woodage T."/>
            <person name="Smith D."/>
            <person name="Lee H.-M."/>
            <person name="Gustafson E."/>
            <person name="Cahill P."/>
            <person name="Kana A."/>
            <person name="Doucette-Stamm L."/>
            <person name="Weinstock K."/>
            <person name="Fechtel K."/>
            <person name="Weiss R.B."/>
            <person name="Dunn D.M."/>
            <person name="Green E.D."/>
            <person name="Blakesley R.W."/>
            <person name="Bouffard G.G."/>
            <person name="De Jong P.J."/>
            <person name="Osoegawa K."/>
            <person name="Zhu B."/>
            <person name="Marra M."/>
            <person name="Schein J."/>
            <person name="Bosdet I."/>
            <person name="Fjell C."/>
            <person name="Jones S."/>
            <person name="Krzywinski M."/>
            <person name="Mathewson C."/>
            <person name="Siddiqui A."/>
            <person name="Wye N."/>
            <person name="McPherson J."/>
            <person name="Zhao S."/>
            <person name="Fraser C.M."/>
            <person name="Shetty J."/>
            <person name="Shatsman S."/>
            <person name="Geer K."/>
            <person name="Chen Y."/>
            <person name="Abramzon S."/>
            <person name="Nierman W.C."/>
            <person name="Havlak P.H."/>
            <person name="Chen R."/>
            <person name="Durbin K.J."/>
            <person name="Egan A."/>
            <person name="Ren Y."/>
            <person name="Song X.-Z."/>
            <person name="Li B."/>
            <person name="Liu Y."/>
            <person name="Qin X."/>
            <person name="Cawley S."/>
            <person name="Cooney A.J."/>
            <person name="D'Souza L.M."/>
            <person name="Martin K."/>
            <person name="Wu J.Q."/>
            <person name="Gonzalez-Garay M.L."/>
            <person name="Jackson A.R."/>
            <person name="Kalafus K.J."/>
            <person name="McLeod M.P."/>
            <person name="Milosavljevic A."/>
            <person name="Virk D."/>
            <person name="Volkov A."/>
            <person name="Wheeler D.A."/>
            <person name="Zhang Z."/>
            <person name="Bailey J.A."/>
            <person name="Eichler E.E."/>
            <person name="Tuzun E."/>
            <person name="Birney E."/>
            <person name="Mongin E."/>
            <person name="Ureta-Vidal A."/>
            <person name="Woodwark C."/>
            <person name="Zdobnov E."/>
            <person name="Bork P."/>
            <person name="Suyama M."/>
            <person name="Torrents D."/>
            <person name="Alexandersson M."/>
            <person name="Trask B.J."/>
            <person name="Young J.M."/>
            <person name="Huang H."/>
            <person name="Wang H."/>
            <person name="Xing H."/>
            <person name="Daniels S."/>
            <person name="Gietzen D."/>
            <person name="Schmidt J."/>
            <person name="Stevens K."/>
            <person name="Vitt U."/>
            <person name="Wingrove J."/>
            <person name="Camara F."/>
            <person name="Mar Alba M."/>
            <person name="Abril J.F."/>
            <person name="Guigo R."/>
            <person name="Smit A."/>
            <person name="Dubchak I."/>
            <person name="Rubin E.M."/>
            <person name="Couronne O."/>
            <person name="Poliakov A."/>
            <person name="Huebner N."/>
            <person name="Ganten D."/>
            <person name="Goesele C."/>
            <person name="Hummel O."/>
            <person name="Kreitler T."/>
            <person name="Lee Y.-A."/>
            <person name="Monti J."/>
            <person name="Schulz H."/>
            <person name="Zimdahl H."/>
            <person name="Himmelbauer H."/>
            <person name="Lehrach H."/>
            <person name="Jacob H.J."/>
            <person name="Bromberg S."/>
            <person name="Gullings-Handley J."/>
            <person name="Jensen-Seaman M.I."/>
            <person name="Kwitek A.E."/>
            <person name="Lazar J."/>
            <person name="Pasko D."/>
            <person name="Tonellato P.J."/>
            <person name="Twigger S."/>
            <person name="Ponting C.P."/>
            <person name="Duarte J.M."/>
            <person name="Rice S."/>
            <person name="Goodstadt L."/>
            <person name="Beatson S.A."/>
            <person name="Emes R.D."/>
            <person name="Winter E.E."/>
            <person name="Webber C."/>
            <person name="Brandt P."/>
            <person name="Nyakatura G."/>
            <person name="Adetobi M."/>
            <person name="Chiaromonte F."/>
            <person name="Elnitski L."/>
            <person name="Eswara P."/>
            <person name="Hardison R.C."/>
            <person name="Hou M."/>
            <person name="Kolbe D."/>
            <person name="Makova K."/>
            <person name="Miller W."/>
            <person name="Nekrutenko A."/>
            <person name="Riemer C."/>
            <person name="Schwartz S."/>
            <person name="Taylor J."/>
            <person name="Yang S."/>
            <person name="Zhang Y."/>
            <person name="Lindpaintner K."/>
            <person name="Andrews T.D."/>
            <person name="Caccamo M."/>
            <person name="Clamp M."/>
            <person name="Clarke L."/>
            <person name="Curwen V."/>
            <person name="Durbin R.M."/>
            <person name="Eyras E."/>
            <person name="Searle S.M."/>
            <person name="Cooper G.M."/>
            <person name="Batzoglou S."/>
            <person name="Brudno M."/>
            <person name="Sidow A."/>
            <person name="Stone E.A."/>
            <person name="Payseur B.A."/>
            <person name="Bourque G."/>
            <person name="Lopez-Otin C."/>
            <person name="Puente X.S."/>
            <person name="Chakrabarti K."/>
            <person name="Chatterji S."/>
            <person name="Dewey C."/>
            <person name="Pachter L."/>
            <person name="Bray N."/>
            <person name="Yap V.B."/>
            <person name="Caspi A."/>
            <person name="Tesler G."/>
            <person name="Pevzner P.A."/>
            <person name="Haussler D."/>
            <person name="Roskin K.M."/>
            <person name="Baertsch R."/>
            <person name="Clawson H."/>
            <person name="Furey T.S."/>
            <person name="Hinrichs A.S."/>
            <person name="Karolchik D."/>
            <person name="Kent W.J."/>
            <person name="Rosenbloom K.R."/>
            <person name="Trumbower H."/>
            <person name="Weirauch M."/>
            <person name="Cooper D.N."/>
            <person name="Stenson P.D."/>
            <person name="Ma B."/>
            <person name="Brent M."/>
            <person name="Arumugam M."/>
            <person name="Shteynberg D."/>
            <person name="Copley R.R."/>
            <person name="Taylor M.S."/>
            <person name="Riethman H."/>
            <person name="Mudunuri U."/>
            <person name="Peterson J."/>
            <person name="Guyer M."/>
            <person name="Felsenfeld A."/>
            <person name="Old S."/>
            <person name="Mockrin S."/>
            <person name="Collins F.S."/>
        </authorList>
    </citation>
    <scope>NUCLEOTIDE SEQUENCE [LARGE SCALE GENOMIC DNA]</scope>
    <source>
        <strain>Brown Norway</strain>
    </source>
</reference>
<reference key="3">
    <citation type="submission" date="2005-07" db="EMBL/GenBank/DDBJ databases">
        <authorList>
            <person name="Mural R.J."/>
            <person name="Adams M.D."/>
            <person name="Myers E.W."/>
            <person name="Smith H.O."/>
            <person name="Venter J.C."/>
        </authorList>
    </citation>
    <scope>NUCLEOTIDE SEQUENCE [LARGE SCALE GENOMIC DNA]</scope>
    <source>
        <strain>Brown Norway</strain>
    </source>
</reference>
<reference key="4">
    <citation type="journal article" date="2005" name="J. Physiol. (Lond.)">
        <title>Thermosensitivity of the two-pore domain K+ channels TREK-2 and TRAAK.</title>
        <authorList>
            <person name="Kang D."/>
            <person name="Choe C."/>
            <person name="Kim D."/>
        </authorList>
    </citation>
    <scope>FUNCTION</scope>
    <scope>TRANSPORTER ACTIVITY</scope>
    <scope>ACTIVITY REGULATION</scope>
    <scope>SUBCELLULAR LOCATION</scope>
</reference>
<reference key="5">
    <citation type="journal article" date="2019" name="Neuron">
        <title>TREK-1 and TRAAK Are Principal K+ Channels at the Nodes of Ranvier for Rapid Action Potential Conduction on Mammalian Myelinated Afferent Nerves.</title>
        <authorList>
            <person name="Kanda H."/>
            <person name="Ling J."/>
            <person name="Tonomura S."/>
            <person name="Noguchi K."/>
            <person name="Matalon S."/>
            <person name="Gu J.G."/>
        </authorList>
    </citation>
    <scope>FUNCTION</scope>
    <scope>TRANSPORTER ACTIVITY</scope>
    <scope>SUBCELLULAR LOCATION</scope>
</reference>
<sequence length="397" mass="42920">MRSTTLLALLALVLLYLVSGALVFQALEQPHEQQVQKDLEDGRDQFLKDHPCVSQKNLEGFIKLVAEALGGGANPETSWTNSSNHSSAWNLGSAFFFSGTIITTIGYGNIALHTDAGRLFCIFYALVGIPLFGMLLAGVGDRLGSSLRRGIGHIEAVFLKWHVPPGLVRMLSAVLFLLIGCLLFVLTPTFVFSYMESWSKLEAIYFVIVTLTTVGFGDYVPGDGTGQNSPAYQPLVWFWILFGLAYFASVLTTIGNWLRAVSRRTRAEMGGLTAQAASWTGTVTARVTQRTGPSAPPPEKEQPLLPSSLPAPPAVAEPAHRPGSPAPAEKVETPPPTASALDYPSENLAFIDESSDTQSERGCALPRAPRGRRRPNPTKKPSRPRGPGRLRDKAVPV</sequence>
<dbReference type="EMBL" id="AF302842">
    <property type="protein sequence ID" value="AAK60504.2"/>
    <property type="molecule type" value="mRNA"/>
</dbReference>
<dbReference type="EMBL" id="AABR06009566">
    <property type="status" value="NOT_ANNOTATED_CDS"/>
    <property type="molecule type" value="Genomic_DNA"/>
</dbReference>
<dbReference type="EMBL" id="CH473953">
    <property type="protein sequence ID" value="EDM12628.1"/>
    <property type="molecule type" value="Genomic_DNA"/>
</dbReference>
<dbReference type="RefSeq" id="NP_446256.2">
    <property type="nucleotide sequence ID" value="NM_053804.2"/>
</dbReference>
<dbReference type="RefSeq" id="XP_008758276.1">
    <property type="nucleotide sequence ID" value="XM_008760054.2"/>
</dbReference>
<dbReference type="RefSeq" id="XP_008758277.1">
    <property type="nucleotide sequence ID" value="XM_008760055.4"/>
</dbReference>
<dbReference type="RefSeq" id="XP_008758278.1">
    <property type="nucleotide sequence ID" value="XM_008760056.2"/>
</dbReference>
<dbReference type="RefSeq" id="XP_063119846.1">
    <property type="nucleotide sequence ID" value="XM_063263776.1"/>
</dbReference>
<dbReference type="SMR" id="G3V8V5"/>
<dbReference type="FunCoup" id="G3V8V5">
    <property type="interactions" value="12"/>
</dbReference>
<dbReference type="STRING" id="10116.ENSRNOP00000028704"/>
<dbReference type="GlyCosmos" id="G3V8V5">
    <property type="glycosylation" value="1 site, No reported glycans"/>
</dbReference>
<dbReference type="GlyGen" id="G3V8V5">
    <property type="glycosylation" value="2 sites"/>
</dbReference>
<dbReference type="PhosphoSitePlus" id="G3V8V5"/>
<dbReference type="PaxDb" id="10116-ENSRNOP00000028704"/>
<dbReference type="ABCD" id="G3V8V5">
    <property type="antibodies" value="1 sequenced antibody"/>
</dbReference>
<dbReference type="Ensembl" id="ENSRNOT00000028704.3">
    <property type="protein sequence ID" value="ENSRNOP00000028704.1"/>
    <property type="gene ID" value="ENSRNOG00000021140.3"/>
</dbReference>
<dbReference type="GeneID" id="116489"/>
<dbReference type="KEGG" id="rno:116489"/>
<dbReference type="AGR" id="RGD:621449"/>
<dbReference type="CTD" id="50801"/>
<dbReference type="RGD" id="621449">
    <property type="gene designation" value="Kcnk4"/>
</dbReference>
<dbReference type="eggNOG" id="KOG1418">
    <property type="taxonomic scope" value="Eukaryota"/>
</dbReference>
<dbReference type="GeneTree" id="ENSGT00940000160310"/>
<dbReference type="HOGENOM" id="CLU_022504_1_1_1"/>
<dbReference type="InParanoid" id="G3V8V5"/>
<dbReference type="OMA" id="VFLKWHV"/>
<dbReference type="PhylomeDB" id="G3V8V5"/>
<dbReference type="TreeFam" id="TF313947"/>
<dbReference type="Reactome" id="R-RNO-1299503">
    <property type="pathway name" value="TWIK related potassium channel (TREK)"/>
</dbReference>
<dbReference type="Reactome" id="R-RNO-5576886">
    <property type="pathway name" value="Phase 4 - resting membrane potential"/>
</dbReference>
<dbReference type="PRO" id="PR:G3V8V5"/>
<dbReference type="Proteomes" id="UP000002494">
    <property type="component" value="Chromosome 1"/>
</dbReference>
<dbReference type="Proteomes" id="UP000234681">
    <property type="component" value="Chromosome 1"/>
</dbReference>
<dbReference type="Bgee" id="ENSRNOG00000021140">
    <property type="expression patterns" value="Expressed in frontal cortex and 9 other cell types or tissues"/>
</dbReference>
<dbReference type="GO" id="GO:0033268">
    <property type="term" value="C:node of Ranvier"/>
    <property type="evidence" value="ECO:0000314"/>
    <property type="project" value="UniProtKB"/>
</dbReference>
<dbReference type="GO" id="GO:0005886">
    <property type="term" value="C:plasma membrane"/>
    <property type="evidence" value="ECO:0000314"/>
    <property type="project" value="UniProtKB"/>
</dbReference>
<dbReference type="GO" id="GO:0034705">
    <property type="term" value="C:potassium channel complex"/>
    <property type="evidence" value="ECO:0000266"/>
    <property type="project" value="RGD"/>
</dbReference>
<dbReference type="GO" id="GO:0098782">
    <property type="term" value="F:mechanosensitive potassium channel activity"/>
    <property type="evidence" value="ECO:0000314"/>
    <property type="project" value="UniProtKB"/>
</dbReference>
<dbReference type="GO" id="GO:0046872">
    <property type="term" value="F:metal ion binding"/>
    <property type="evidence" value="ECO:0007669"/>
    <property type="project" value="UniProtKB-KW"/>
</dbReference>
<dbReference type="GO" id="GO:0015271">
    <property type="term" value="F:outward rectifier potassium channel activity"/>
    <property type="evidence" value="ECO:0000250"/>
    <property type="project" value="UniProtKB"/>
</dbReference>
<dbReference type="GO" id="GO:0005267">
    <property type="term" value="F:potassium channel activity"/>
    <property type="evidence" value="ECO:0000314"/>
    <property type="project" value="UniProtKB"/>
</dbReference>
<dbReference type="GO" id="GO:0022841">
    <property type="term" value="F:potassium ion leak channel activity"/>
    <property type="evidence" value="ECO:0000314"/>
    <property type="project" value="UniProtKB"/>
</dbReference>
<dbReference type="GO" id="GO:0097604">
    <property type="term" value="F:temperature-gated cation channel activity"/>
    <property type="evidence" value="ECO:0000314"/>
    <property type="project" value="UniProtKB"/>
</dbReference>
<dbReference type="GO" id="GO:0071468">
    <property type="term" value="P:cellular response to acidic pH"/>
    <property type="evidence" value="ECO:0000250"/>
    <property type="project" value="UniProtKB"/>
</dbReference>
<dbReference type="GO" id="GO:0071469">
    <property type="term" value="P:cellular response to alkaline pH"/>
    <property type="evidence" value="ECO:0000314"/>
    <property type="project" value="UniProtKB"/>
</dbReference>
<dbReference type="GO" id="GO:1904551">
    <property type="term" value="P:cellular response to arachidonate"/>
    <property type="evidence" value="ECO:0000250"/>
    <property type="project" value="UniProtKB"/>
</dbReference>
<dbReference type="GO" id="GO:0071398">
    <property type="term" value="P:cellular response to fatty acid"/>
    <property type="evidence" value="ECO:0000314"/>
    <property type="project" value="UniProtKB"/>
</dbReference>
<dbReference type="GO" id="GO:0071260">
    <property type="term" value="P:cellular response to mechanical stimulus"/>
    <property type="evidence" value="ECO:0000250"/>
    <property type="project" value="UniProtKB"/>
</dbReference>
<dbReference type="GO" id="GO:0071502">
    <property type="term" value="P:cellular response to temperature stimulus"/>
    <property type="evidence" value="ECO:0000314"/>
    <property type="project" value="UniProtKB"/>
</dbReference>
<dbReference type="GO" id="GO:0050976">
    <property type="term" value="P:detection of mechanical stimulus involved in sensory perception of touch"/>
    <property type="evidence" value="ECO:0000315"/>
    <property type="project" value="UniProtKB"/>
</dbReference>
<dbReference type="GO" id="GO:0007613">
    <property type="term" value="P:memory"/>
    <property type="evidence" value="ECO:0000270"/>
    <property type="project" value="RGD"/>
</dbReference>
<dbReference type="GO" id="GO:0019228">
    <property type="term" value="P:neuronal action potential"/>
    <property type="evidence" value="ECO:0000315"/>
    <property type="project" value="UniProtKB"/>
</dbReference>
<dbReference type="GO" id="GO:0071805">
    <property type="term" value="P:potassium ion transmembrane transport"/>
    <property type="evidence" value="ECO:0000314"/>
    <property type="project" value="UniProtKB"/>
</dbReference>
<dbReference type="GO" id="GO:1990478">
    <property type="term" value="P:response to ultrasound"/>
    <property type="evidence" value="ECO:0000250"/>
    <property type="project" value="UniProtKB"/>
</dbReference>
<dbReference type="GO" id="GO:0019233">
    <property type="term" value="P:sensory perception of pain"/>
    <property type="evidence" value="ECO:0000250"/>
    <property type="project" value="UniProtKB"/>
</dbReference>
<dbReference type="GO" id="GO:0050951">
    <property type="term" value="P:sensory perception of temperature stimulus"/>
    <property type="evidence" value="ECO:0000250"/>
    <property type="project" value="UniProtKB"/>
</dbReference>
<dbReference type="FunFam" id="1.10.287.70:FF:000106">
    <property type="entry name" value="Potassium channel subfamily K member 4"/>
    <property type="match status" value="1"/>
</dbReference>
<dbReference type="Gene3D" id="1.10.287.70">
    <property type="match status" value="1"/>
</dbReference>
<dbReference type="InterPro" id="IPR003280">
    <property type="entry name" value="2pore_dom_K_chnl"/>
</dbReference>
<dbReference type="InterPro" id="IPR008074">
    <property type="entry name" value="2pore_dom_K_chnl_TRAAK"/>
</dbReference>
<dbReference type="InterPro" id="IPR013099">
    <property type="entry name" value="K_chnl_dom"/>
</dbReference>
<dbReference type="PANTHER" id="PTHR11003:SF30">
    <property type="entry name" value="POTASSIUM CHANNEL SUBFAMILY K MEMBER 4"/>
    <property type="match status" value="1"/>
</dbReference>
<dbReference type="PANTHER" id="PTHR11003">
    <property type="entry name" value="POTASSIUM CHANNEL, SUBFAMILY K"/>
    <property type="match status" value="1"/>
</dbReference>
<dbReference type="Pfam" id="PF07885">
    <property type="entry name" value="Ion_trans_2"/>
    <property type="match status" value="2"/>
</dbReference>
<dbReference type="PRINTS" id="PR01333">
    <property type="entry name" value="2POREKCHANEL"/>
</dbReference>
<dbReference type="PRINTS" id="PR01691">
    <property type="entry name" value="TRAAKCHANNEL"/>
</dbReference>
<dbReference type="SUPFAM" id="SSF81324">
    <property type="entry name" value="Voltage-gated potassium channels"/>
    <property type="match status" value="2"/>
</dbReference>
<proteinExistence type="evidence at transcript level"/>
<feature type="chain" id="PRO_0000432591" description="Potassium channel subfamily K member 4">
    <location>
        <begin position="1"/>
        <end position="397"/>
    </location>
</feature>
<feature type="topological domain" description="Cytoplasmic" evidence="3">
    <location>
        <begin position="1"/>
        <end position="3"/>
    </location>
</feature>
<feature type="transmembrane region" description="Helical" evidence="3">
    <location>
        <begin position="4"/>
        <end position="24"/>
    </location>
</feature>
<feature type="topological domain" description="Extracellular" evidence="3">
    <location>
        <begin position="25"/>
        <end position="88"/>
    </location>
</feature>
<feature type="intramembrane region" description="Helical; Name=Pore helix 1" evidence="3">
    <location>
        <begin position="89"/>
        <end position="103"/>
    </location>
</feature>
<feature type="intramembrane region" evidence="3">
    <location>
        <begin position="104"/>
        <end position="110"/>
    </location>
</feature>
<feature type="topological domain" description="Extracellular" evidence="3">
    <location>
        <begin position="111"/>
        <end position="118"/>
    </location>
</feature>
<feature type="transmembrane region" description="Helical" evidence="3">
    <location>
        <begin position="119"/>
        <end position="151"/>
    </location>
</feature>
<feature type="topological domain" description="Cytoplasmic" evidence="3">
    <location>
        <begin position="152"/>
        <end position="173"/>
    </location>
</feature>
<feature type="transmembrane region" description="Helical" evidence="3">
    <location>
        <begin position="174"/>
        <end position="195"/>
    </location>
</feature>
<feature type="topological domain" description="Extracellular" evidence="3">
    <location>
        <begin position="196"/>
        <end position="200"/>
    </location>
</feature>
<feature type="intramembrane region" description="Helical; Name=Pore helix 2" evidence="3">
    <location>
        <begin position="201"/>
        <end position="214"/>
    </location>
</feature>
<feature type="intramembrane region" evidence="3">
    <location>
        <begin position="215"/>
        <end position="220"/>
    </location>
</feature>
<feature type="topological domain" description="Extracellular" evidence="3">
    <location>
        <begin position="221"/>
        <end position="234"/>
    </location>
</feature>
<feature type="transmembrane region" description="Helical" evidence="3">
    <location>
        <begin position="235"/>
        <end position="261"/>
    </location>
</feature>
<feature type="topological domain" description="Cytoplasmic" evidence="3">
    <location>
        <begin position="262"/>
        <end position="397"/>
    </location>
</feature>
<feature type="region of interest" description="Selectivity filter 1" evidence="3">
    <location>
        <begin position="104"/>
        <end position="109"/>
    </location>
</feature>
<feature type="region of interest" description="Selectivity filter 2" evidence="3">
    <location>
        <begin position="213"/>
        <end position="218"/>
    </location>
</feature>
<feature type="region of interest" description="Disordered" evidence="6">
    <location>
        <begin position="282"/>
        <end position="397"/>
    </location>
</feature>
<feature type="compositionally biased region" description="Polar residues" evidence="6">
    <location>
        <begin position="282"/>
        <end position="292"/>
    </location>
</feature>
<feature type="compositionally biased region" description="Basic residues" evidence="6">
    <location>
        <begin position="369"/>
        <end position="388"/>
    </location>
</feature>
<feature type="binding site" evidence="2">
    <location>
        <position position="104"/>
    </location>
    <ligand>
        <name>K(+)</name>
        <dbReference type="ChEBI" id="CHEBI:29103"/>
        <label>1</label>
    </ligand>
</feature>
<feature type="binding site" evidence="2">
    <location>
        <position position="104"/>
    </location>
    <ligand>
        <name>K(+)</name>
        <dbReference type="ChEBI" id="CHEBI:29103"/>
        <label>4</label>
    </ligand>
</feature>
<feature type="binding site" evidence="2">
    <location>
        <position position="105"/>
    </location>
    <ligand>
        <name>K(+)</name>
        <dbReference type="ChEBI" id="CHEBI:29103"/>
        <label>1</label>
    </ligand>
</feature>
<feature type="binding site" evidence="2">
    <location>
        <position position="105"/>
    </location>
    <ligand>
        <name>K(+)</name>
        <dbReference type="ChEBI" id="CHEBI:29103"/>
        <label>2</label>
    </ligand>
</feature>
<feature type="binding site" evidence="2">
    <location>
        <position position="106"/>
    </location>
    <ligand>
        <name>K(+)</name>
        <dbReference type="ChEBI" id="CHEBI:29103"/>
        <label>2</label>
    </ligand>
</feature>
<feature type="binding site" evidence="2">
    <location>
        <position position="106"/>
    </location>
    <ligand>
        <name>K(+)</name>
        <dbReference type="ChEBI" id="CHEBI:29103"/>
        <label>3</label>
    </ligand>
</feature>
<feature type="binding site" evidence="2">
    <location>
        <position position="107"/>
    </location>
    <ligand>
        <name>K(+)</name>
        <dbReference type="ChEBI" id="CHEBI:29103"/>
        <label>3</label>
    </ligand>
</feature>
<feature type="binding site" evidence="2">
    <location>
        <position position="213"/>
    </location>
    <ligand>
        <name>K(+)</name>
        <dbReference type="ChEBI" id="CHEBI:29103"/>
        <label>1</label>
    </ligand>
</feature>
<feature type="binding site" evidence="2">
    <location>
        <position position="213"/>
    </location>
    <ligand>
        <name>K(+)</name>
        <dbReference type="ChEBI" id="CHEBI:29103"/>
        <label>4</label>
    </ligand>
</feature>
<feature type="binding site" evidence="2">
    <location>
        <position position="214"/>
    </location>
    <ligand>
        <name>K(+)</name>
        <dbReference type="ChEBI" id="CHEBI:29103"/>
        <label>1</label>
    </ligand>
</feature>
<feature type="binding site" evidence="2">
    <location>
        <position position="214"/>
    </location>
    <ligand>
        <name>K(+)</name>
        <dbReference type="ChEBI" id="CHEBI:29103"/>
        <label>2</label>
    </ligand>
</feature>
<feature type="binding site" evidence="2">
    <location>
        <position position="215"/>
    </location>
    <ligand>
        <name>K(+)</name>
        <dbReference type="ChEBI" id="CHEBI:29103"/>
        <label>2</label>
    </ligand>
</feature>
<feature type="binding site" evidence="2">
    <location>
        <position position="215"/>
    </location>
    <ligand>
        <name>K(+)</name>
        <dbReference type="ChEBI" id="CHEBI:29103"/>
        <label>3</label>
    </ligand>
</feature>
<feature type="binding site" evidence="2">
    <location>
        <position position="216"/>
    </location>
    <ligand>
        <name>K(+)</name>
        <dbReference type="ChEBI" id="CHEBI:29103"/>
        <label>3</label>
    </ligand>
</feature>
<feature type="glycosylation site" description="N-linked (GlcNAc...) asparagine" evidence="4">
    <location>
        <position position="81"/>
    </location>
</feature>
<feature type="disulfide bond" description="Interchain (with C-52)" evidence="3">
    <location>
        <position position="52"/>
    </location>
</feature>
<feature type="sequence conflict" description="In Ref. 1; AAK60504." evidence="10" ref="1">
    <original>Q</original>
    <variation>Y</variation>
    <location>
        <position position="25"/>
    </location>
</feature>
<feature type="sequence conflict" description="In Ref. 1; AAK60504." evidence="10" ref="1">
    <original>E</original>
    <variation>K</variation>
    <location>
        <position position="196"/>
    </location>
</feature>
<feature type="sequence conflict" description="In Ref. 1; AAK60504." evidence="10" ref="1">
    <original>E</original>
    <variation>K</variation>
    <location>
        <position position="202"/>
    </location>
</feature>
<feature type="sequence conflict" description="In Ref. 1; AAK60504." evidence="10" ref="1">
    <original>L</original>
    <variation>F</variation>
    <location>
        <position position="251"/>
    </location>
</feature>
<name>KCNK4_RAT</name>
<protein>
    <recommendedName>
        <fullName>Potassium channel subfamily K member 4</fullName>
    </recommendedName>
    <alternativeName>
        <fullName>TWIK-related arachidonic acid-stimulated potassium channel protein</fullName>
        <shortName>TRAAK</shortName>
    </alternativeName>
</protein>
<comment type="function">
    <text evidence="3 7 9">K(+) channel that conducts voltage-dependent outward rectifying currents upon membrane depolarization. Voltage sensing is coupled to K(+) electrochemical gradient in an 'ion flux gating' mode where outward but not inward ion flow opens the gate. Converts to voltage-independent 'leak' conductance mode upon stimulation by various stimuli including mechanical membrane stretch, basic pH, heat and lipids (PubMed:11374070, PubMed:31630908). Homo- and heterodimerizes to form functional channels with distinct regulatory and gating properties (By similarity). At trigeminal A-beta afferent nerves, the heterodimer of KCNK2/TREK-1 and KCNK4/TRAAK is mostly coexpressed at nodes of Ranvier where it conducts voltage-independent mechanosensitive and thermosensitive currents, allowing rapid action potential repolarization, high speed and high frequence saltatory conduction on myelinated nerves to ensure prompt sensory responses (PubMed:31630908). Permeable to other monovalent cations such as Rb(+) and Cs(+) (By similarity).</text>
</comment>
<comment type="catalytic activity">
    <reaction evidence="7 9">
        <text>K(+)(in) = K(+)(out)</text>
        <dbReference type="Rhea" id="RHEA:29463"/>
        <dbReference type="ChEBI" id="CHEBI:29103"/>
    </reaction>
</comment>
<comment type="catalytic activity">
    <reaction evidence="3">
        <text>Rb(+)(in) = Rb(+)(out)</text>
        <dbReference type="Rhea" id="RHEA:78547"/>
        <dbReference type="ChEBI" id="CHEBI:49847"/>
    </reaction>
</comment>
<comment type="catalytic activity">
    <reaction evidence="3">
        <text>Cs(+)(in) = Cs(+)(out)</text>
        <dbReference type="Rhea" id="RHEA:78555"/>
        <dbReference type="ChEBI" id="CHEBI:49547"/>
    </reaction>
</comment>
<comment type="activity regulation">
    <text evidence="7 8">Activated by various stimuli including intracellular basic pH, mechanical stretch and heat and polyunsaturated fatty acids such as arachidonic acid.</text>
</comment>
<comment type="subunit">
    <text evidence="1">Homodimer; disulfide-linked. Forms heterodimers with other 2-pore domain K(+) channel subunits, such as KCNK2 and KCNK10.</text>
</comment>
<comment type="subcellular location">
    <subcellularLocation>
        <location evidence="7">Cell membrane</location>
        <topology evidence="10">Multi-pass membrane protein</topology>
    </subcellularLocation>
    <subcellularLocation>
        <location evidence="9">Cell projection</location>
        <location evidence="9">Axon</location>
    </subcellularLocation>
    <text evidence="9">Localizes at the Ranvier nodes of myelinated afferent nerves.</text>
</comment>
<comment type="tissue specificity">
    <text evidence="7">Detected in brain, and at much lower levels in liver, skeletal muscle and testis.</text>
</comment>
<comment type="domain">
    <text evidence="2">Each subunit contributes two pore-forming domains 1 and 2 which assemble to form a single pore with M2 and M4 transmembrane helices lining the central cavity and M1 and M3 facing the lipid bilayer. The transmembrane helices are bridged by the selectivity filters 1 and 2 carrying a signature sequence TxTTxGYGD that coordinate the permeant ions. Up to four ions can simultaneously occupy the selectivity filter and at least two elementary charges must translocate across the filter to convert it into the open conformation.</text>
</comment>
<comment type="domain">
    <text evidence="3">Channel opening is brought about by a conformation change that involves buckling of the second transmembrane helix and affects the position and orientation of the fourth transmembrane helix.</text>
</comment>
<comment type="similarity">
    <text evidence="5">Belongs to the two pore domain potassium channel (TC 1.A.1.8) family.</text>
</comment>
<accession>G3V8V5</accession>
<accession>Q924I4</accession>
<gene>
    <name evidence="13" type="primary">Kcnk4</name>
</gene>
<evidence type="ECO:0000250" key="1">
    <source>
        <dbReference type="UniProtKB" id="O88454"/>
    </source>
</evidence>
<evidence type="ECO:0000250" key="2">
    <source>
        <dbReference type="UniProtKB" id="P57789"/>
    </source>
</evidence>
<evidence type="ECO:0000250" key="3">
    <source>
        <dbReference type="UniProtKB" id="Q9NYG8"/>
    </source>
</evidence>
<evidence type="ECO:0000255" key="4"/>
<evidence type="ECO:0000255" key="5">
    <source>
        <dbReference type="RuleBase" id="RU003857"/>
    </source>
</evidence>
<evidence type="ECO:0000256" key="6">
    <source>
        <dbReference type="SAM" id="MobiDB-lite"/>
    </source>
</evidence>
<evidence type="ECO:0000269" key="7">
    <source>
    </source>
</evidence>
<evidence type="ECO:0000269" key="8">
    <source>
    </source>
</evidence>
<evidence type="ECO:0000269" key="9">
    <source>
    </source>
</evidence>
<evidence type="ECO:0000305" key="10"/>
<evidence type="ECO:0000312" key="11">
    <source>
        <dbReference type="EMBL" id="AAK60504.2"/>
    </source>
</evidence>
<evidence type="ECO:0000312" key="12">
    <source>
        <dbReference type="Proteomes" id="UP000002494"/>
    </source>
</evidence>
<evidence type="ECO:0000312" key="13">
    <source>
        <dbReference type="RGD" id="621449"/>
    </source>
</evidence>